<dbReference type="EMBL" id="BX294142">
    <property type="protein sequence ID" value="CAD74274.1"/>
    <property type="molecule type" value="Genomic_DNA"/>
</dbReference>
<dbReference type="RefSeq" id="NP_866734.1">
    <property type="nucleotide sequence ID" value="NC_005027.1"/>
</dbReference>
<dbReference type="RefSeq" id="WP_007340094.1">
    <property type="nucleotide sequence ID" value="NC_005027.1"/>
</dbReference>
<dbReference type="SMR" id="Q7URR4"/>
<dbReference type="FunCoup" id="Q7URR4">
    <property type="interactions" value="498"/>
</dbReference>
<dbReference type="STRING" id="243090.RB5500"/>
<dbReference type="EnsemblBacteria" id="CAD74274">
    <property type="protein sequence ID" value="CAD74274"/>
    <property type="gene ID" value="RB5500"/>
</dbReference>
<dbReference type="KEGG" id="rba:RB5500"/>
<dbReference type="PATRIC" id="fig|243090.15.peg.2643"/>
<dbReference type="eggNOG" id="COG0217">
    <property type="taxonomic scope" value="Bacteria"/>
</dbReference>
<dbReference type="HOGENOM" id="CLU_062974_2_2_0"/>
<dbReference type="InParanoid" id="Q7URR4"/>
<dbReference type="OrthoDB" id="9781053at2"/>
<dbReference type="Proteomes" id="UP000001025">
    <property type="component" value="Chromosome"/>
</dbReference>
<dbReference type="GO" id="GO:0005829">
    <property type="term" value="C:cytosol"/>
    <property type="evidence" value="ECO:0000318"/>
    <property type="project" value="GO_Central"/>
</dbReference>
<dbReference type="GO" id="GO:0003677">
    <property type="term" value="F:DNA binding"/>
    <property type="evidence" value="ECO:0007669"/>
    <property type="project" value="UniProtKB-UniRule"/>
</dbReference>
<dbReference type="GO" id="GO:0006355">
    <property type="term" value="P:regulation of DNA-templated transcription"/>
    <property type="evidence" value="ECO:0007669"/>
    <property type="project" value="UniProtKB-UniRule"/>
</dbReference>
<dbReference type="FunFam" id="1.10.10.200:FF:000002">
    <property type="entry name" value="Probable transcriptional regulatory protein CLM62_37755"/>
    <property type="match status" value="1"/>
</dbReference>
<dbReference type="Gene3D" id="1.10.10.200">
    <property type="match status" value="1"/>
</dbReference>
<dbReference type="Gene3D" id="3.30.70.980">
    <property type="match status" value="2"/>
</dbReference>
<dbReference type="HAMAP" id="MF_00693">
    <property type="entry name" value="Transcrip_reg_TACO1"/>
    <property type="match status" value="1"/>
</dbReference>
<dbReference type="InterPro" id="IPR017856">
    <property type="entry name" value="Integrase-like_N"/>
</dbReference>
<dbReference type="InterPro" id="IPR048300">
    <property type="entry name" value="TACO1_YebC-like_2nd/3rd_dom"/>
</dbReference>
<dbReference type="InterPro" id="IPR049083">
    <property type="entry name" value="TACO1_YebC_N"/>
</dbReference>
<dbReference type="InterPro" id="IPR002876">
    <property type="entry name" value="Transcrip_reg_TACO1-like"/>
</dbReference>
<dbReference type="InterPro" id="IPR026564">
    <property type="entry name" value="Transcrip_reg_TACO1-like_dom3"/>
</dbReference>
<dbReference type="InterPro" id="IPR029072">
    <property type="entry name" value="YebC-like"/>
</dbReference>
<dbReference type="NCBIfam" id="NF001030">
    <property type="entry name" value="PRK00110.1"/>
    <property type="match status" value="1"/>
</dbReference>
<dbReference type="NCBIfam" id="NF009044">
    <property type="entry name" value="PRK12378.1"/>
    <property type="match status" value="1"/>
</dbReference>
<dbReference type="NCBIfam" id="TIGR01033">
    <property type="entry name" value="YebC/PmpR family DNA-binding transcriptional regulator"/>
    <property type="match status" value="1"/>
</dbReference>
<dbReference type="PANTHER" id="PTHR12532:SF6">
    <property type="entry name" value="TRANSCRIPTIONAL REGULATORY PROTEIN YEBC-RELATED"/>
    <property type="match status" value="1"/>
</dbReference>
<dbReference type="PANTHER" id="PTHR12532">
    <property type="entry name" value="TRANSLATIONAL ACTIVATOR OF CYTOCHROME C OXIDASE 1"/>
    <property type="match status" value="1"/>
</dbReference>
<dbReference type="Pfam" id="PF20772">
    <property type="entry name" value="TACO1_YebC_N"/>
    <property type="match status" value="1"/>
</dbReference>
<dbReference type="Pfam" id="PF01709">
    <property type="entry name" value="Transcrip_reg"/>
    <property type="match status" value="1"/>
</dbReference>
<dbReference type="SUPFAM" id="SSF75625">
    <property type="entry name" value="YebC-like"/>
    <property type="match status" value="1"/>
</dbReference>
<comment type="subcellular location">
    <subcellularLocation>
        <location evidence="1">Cytoplasm</location>
    </subcellularLocation>
</comment>
<comment type="similarity">
    <text evidence="1">Belongs to the TACO1 family.</text>
</comment>
<keyword id="KW-0963">Cytoplasm</keyword>
<keyword id="KW-0238">DNA-binding</keyword>
<keyword id="KW-1185">Reference proteome</keyword>
<keyword id="KW-0804">Transcription</keyword>
<keyword id="KW-0805">Transcription regulation</keyword>
<gene>
    <name type="ordered locus">RB5500</name>
</gene>
<accession>Q7URR4</accession>
<evidence type="ECO:0000255" key="1">
    <source>
        <dbReference type="HAMAP-Rule" id="MF_00693"/>
    </source>
</evidence>
<organism>
    <name type="scientific">Rhodopirellula baltica (strain DSM 10527 / NCIMB 13988 / SH1)</name>
    <dbReference type="NCBI Taxonomy" id="243090"/>
    <lineage>
        <taxon>Bacteria</taxon>
        <taxon>Pseudomonadati</taxon>
        <taxon>Planctomycetota</taxon>
        <taxon>Planctomycetia</taxon>
        <taxon>Pirellulales</taxon>
        <taxon>Pirellulaceae</taxon>
        <taxon>Rhodopirellula</taxon>
    </lineage>
</organism>
<protein>
    <recommendedName>
        <fullName evidence="1">Probable transcriptional regulatory protein RB5500</fullName>
    </recommendedName>
</protein>
<proteinExistence type="inferred from homology"/>
<feature type="chain" id="PRO_0000175876" description="Probable transcriptional regulatory protein RB5500">
    <location>
        <begin position="1"/>
        <end position="246"/>
    </location>
</feature>
<sequence>MAGHSKWANIQHRKGRVDAQRGKMWSKLSKAIIVSAKMGGGDPSLNIRLRKAIDDAKAVSMPKDNIERAIKRGTGELDGDAVEEVLYEGYGPGGVAVMCLALTDNRNRTAPELRTMFGKFGGELGKTGCVSYLFERKGIFVFGEGADEEKVTELALENGADDVEVDEDGKVQVTCSPEAFSDLEVAFDEAGMDTEVSEVTQIASTNVDLDESVSGKVLALLEALDDHDDIQTVSTNANFPSESVSE</sequence>
<reference key="1">
    <citation type="journal article" date="2003" name="Proc. Natl. Acad. Sci. U.S.A.">
        <title>Complete genome sequence of the marine planctomycete Pirellula sp. strain 1.</title>
        <authorList>
            <person name="Gloeckner F.O."/>
            <person name="Kube M."/>
            <person name="Bauer M."/>
            <person name="Teeling H."/>
            <person name="Lombardot T."/>
            <person name="Ludwig W."/>
            <person name="Gade D."/>
            <person name="Beck A."/>
            <person name="Borzym K."/>
            <person name="Heitmann K."/>
            <person name="Rabus R."/>
            <person name="Schlesner H."/>
            <person name="Amann R."/>
            <person name="Reinhardt R."/>
        </authorList>
    </citation>
    <scope>NUCLEOTIDE SEQUENCE [LARGE SCALE GENOMIC DNA]</scope>
    <source>
        <strain>DSM 10527 / NCIMB 13988 / SH1</strain>
    </source>
</reference>
<name>Y5500_RHOBA</name>